<comment type="function">
    <molecule>Isoform 2</molecule>
    <text evidence="10">May act as a competitive inhibitor of calmodulin-dependent enzymes such as calcineurin in neurons.</text>
</comment>
<comment type="subunit">
    <text evidence="10">Interacts with CALM1.</text>
</comment>
<comment type="subcellular location">
    <subcellularLocation>
        <location evidence="8 9">Cytoplasm</location>
    </subcellularLocation>
</comment>
<comment type="alternative products">
    <event type="alternative splicing"/>
    <isoform>
        <id>Q9DCB4-1</id>
        <name>1</name>
        <name>TARPP</name>
        <sequence type="displayed"/>
    </isoform>
    <isoform>
        <id>Q9DCB4-2</id>
        <name>2</name>
        <name>ARPP-21</name>
        <name>RCS</name>
        <sequence type="described" ref="VSP_029477 VSP_029478"/>
    </isoform>
    <isoform>
        <id>Q9DCB4-3</id>
        <name>3</name>
        <sequence type="described" ref="VSP_029485 VSP_029490"/>
    </isoform>
    <isoform>
        <id>Q9DCB4-4</id>
        <name>4</name>
        <sequence type="described" ref="VSP_029485 VSP_029488 VSP_029490"/>
    </isoform>
    <isoform>
        <id>Q9DCB4-5</id>
        <name>5</name>
        <sequence type="described" ref="VSP_029485"/>
    </isoform>
    <isoform>
        <id>Q9DCB4-6</id>
        <name>6</name>
        <sequence type="described" ref="VSP_029479 VSP_029480"/>
    </isoform>
    <isoform>
        <id>Q9DCB4-7</id>
        <name>7</name>
        <sequence type="described" ref="VSP_029487 VSP_029489"/>
    </isoform>
    <isoform>
        <id>Q9DCB4-8</id>
        <name>8</name>
        <sequence type="described" ref="VSP_029483 VSP_029484"/>
    </isoform>
    <isoform>
        <id>Q9DCB4-9</id>
        <name>9</name>
        <sequence type="described" ref="VSP_029479 VSP_029481 VSP_029491 VSP_029492"/>
    </isoform>
    <isoform>
        <id>Q9DCB4-10</id>
        <name>10</name>
        <sequence type="described" ref="VSP_029482 VSP_029486"/>
    </isoform>
</comment>
<comment type="tissue specificity">
    <molecule>Isoform 1</molecule>
    <text evidence="8">Present at high levels in thymus and low levels in brain. In thymus, isoform 1 is specifically found in immature thymocytes (at protein level).</text>
</comment>
<comment type="induction">
    <molecule>Isoform 1</molecule>
    <text evidence="8">Down-regulated in thymocytes upon TCR engagement (at protein level).</text>
</comment>
<comment type="PTM">
    <text evidence="7 10">Phosphorylation of isoform 2 at Ser-55 is enhanced upon dopamine D1 receptor activation and favors interaction with CALM1.</text>
</comment>
<comment type="PTM">
    <molecule>Isoform 1</molecule>
    <text evidence="14">Methylated by CARM1 at Arg-650 in immature thymocytes.</text>
</comment>
<comment type="miscellaneous">
    <molecule>Isoform 10</molecule>
    <text evidence="13">May be produced at very low levels due to a premature stop codon in the mRNA, leading to nonsense-mediated mRNA decay.</text>
</comment>
<gene>
    <name type="primary">Arpp21</name>
    <name type="synonym">Rcs</name>
    <name type="synonym">Tarpp</name>
</gene>
<feature type="initiator methionine" description="Removed" evidence="1">
    <location>
        <position position="1"/>
    </location>
</feature>
<feature type="chain" id="PRO_0000064683" description="cAMP-regulated phosphoprotein 21">
    <location>
        <begin position="2"/>
        <end position="807"/>
    </location>
</feature>
<feature type="domain" description="R3H" evidence="4">
    <location>
        <begin position="163"/>
        <end position="226"/>
    </location>
</feature>
<feature type="domain" description="SUZ" evidence="5">
    <location>
        <begin position="227"/>
        <end position="298"/>
    </location>
</feature>
<feature type="region of interest" description="Disordered" evidence="6">
    <location>
        <begin position="1"/>
        <end position="127"/>
    </location>
</feature>
<feature type="region of interest" description="Disordered" evidence="6">
    <location>
        <begin position="245"/>
        <end position="282"/>
    </location>
</feature>
<feature type="region of interest" description="Disordered" evidence="6">
    <location>
        <begin position="328"/>
        <end position="434"/>
    </location>
</feature>
<feature type="region of interest" description="Disordered" evidence="6">
    <location>
        <begin position="474"/>
        <end position="536"/>
    </location>
</feature>
<feature type="region of interest" description="Disordered" evidence="6">
    <location>
        <begin position="552"/>
        <end position="576"/>
    </location>
</feature>
<feature type="region of interest" description="Disordered" evidence="6">
    <location>
        <begin position="595"/>
        <end position="627"/>
    </location>
</feature>
<feature type="coiled-coil region" evidence="3">
    <location>
        <begin position="32"/>
        <end position="57"/>
    </location>
</feature>
<feature type="compositionally biased region" description="Polar residues" evidence="6">
    <location>
        <begin position="89"/>
        <end position="98"/>
    </location>
</feature>
<feature type="compositionally biased region" description="Basic and acidic residues" evidence="6">
    <location>
        <begin position="101"/>
        <end position="127"/>
    </location>
</feature>
<feature type="compositionally biased region" description="Low complexity" evidence="6">
    <location>
        <begin position="337"/>
        <end position="348"/>
    </location>
</feature>
<feature type="compositionally biased region" description="Basic and acidic residues" evidence="6">
    <location>
        <begin position="349"/>
        <end position="358"/>
    </location>
</feature>
<feature type="compositionally biased region" description="Polar residues" evidence="6">
    <location>
        <begin position="359"/>
        <end position="380"/>
    </location>
</feature>
<feature type="compositionally biased region" description="Low complexity" evidence="6">
    <location>
        <begin position="401"/>
        <end position="421"/>
    </location>
</feature>
<feature type="compositionally biased region" description="Polar residues" evidence="6">
    <location>
        <begin position="422"/>
        <end position="434"/>
    </location>
</feature>
<feature type="compositionally biased region" description="Pro residues" evidence="6">
    <location>
        <begin position="514"/>
        <end position="524"/>
    </location>
</feature>
<feature type="compositionally biased region" description="Low complexity" evidence="6">
    <location>
        <begin position="525"/>
        <end position="535"/>
    </location>
</feature>
<feature type="compositionally biased region" description="Polar residues" evidence="6">
    <location>
        <begin position="552"/>
        <end position="563"/>
    </location>
</feature>
<feature type="compositionally biased region" description="Polar residues" evidence="6">
    <location>
        <begin position="595"/>
        <end position="613"/>
    </location>
</feature>
<feature type="modified residue" description="N-acetylserine" evidence="1">
    <location>
        <position position="2"/>
    </location>
</feature>
<feature type="modified residue" description="Phosphoserine" evidence="15">
    <location>
        <position position="32"/>
    </location>
</feature>
<feature type="modified residue" description="Phosphoserine; by PKA" evidence="7 10">
    <location>
        <position position="55"/>
    </location>
</feature>
<feature type="modified residue" description="Phosphoserine" evidence="15">
    <location>
        <position position="133"/>
    </location>
</feature>
<feature type="modified residue" description="Phosphoserine" evidence="15">
    <location>
        <position position="298"/>
    </location>
</feature>
<feature type="modified residue" description="Phosphoserine" evidence="15">
    <location>
        <position position="361"/>
    </location>
</feature>
<feature type="modified residue" description="Phosphoserine" evidence="2">
    <location>
        <position position="381"/>
    </location>
</feature>
<feature type="modified residue" description="Phosphoserine" evidence="15">
    <location>
        <position position="557"/>
    </location>
</feature>
<feature type="modified residue" description="Asymmetric dimethylarginine" evidence="9">
    <location>
        <position position="650"/>
    </location>
</feature>
<feature type="splice variant" id="VSP_029477" description="In isoform 2." evidence="11 12">
    <original>ES</original>
    <variation>TL</variation>
    <location>
        <begin position="87"/>
        <end position="88"/>
    </location>
</feature>
<feature type="splice variant" id="VSP_029478" description="In isoform 2." evidence="11 12">
    <location>
        <begin position="89"/>
        <end position="807"/>
    </location>
</feature>
<feature type="splice variant" id="VSP_029479" description="In isoform 6 and isoform 9." evidence="12">
    <original>I</original>
    <variation>M</variation>
    <location>
        <position position="228"/>
    </location>
</feature>
<feature type="splice variant" id="VSP_029480" description="In isoform 6." evidence="12">
    <location>
        <begin position="229"/>
        <end position="807"/>
    </location>
</feature>
<feature type="splice variant" id="VSP_029481" description="In isoform 9." evidence="12">
    <location>
        <begin position="229"/>
        <end position="330"/>
    </location>
</feature>
<feature type="splice variant" id="VSP_029482" description="In isoform 10." evidence="11">
    <original>PEQRFCEHLKDEKSEESQKRFILKRDNSSIDKEDNQNRMHPFRDDRRSKSIEER</original>
    <variation>QFAPRKAYFWTTGLTETAQEELPGAGRAAQRLSSGGQTTSGLGAAQIRTVPTAI</variation>
    <location>
        <begin position="229"/>
        <end position="282"/>
    </location>
</feature>
<feature type="splice variant" id="VSP_029483" description="In isoform 8." evidence="12">
    <original>PEQRFCEHLKDEKSEESQKR</original>
    <variation>VQDTGWRCKHAHRTGAVCTN</variation>
    <location>
        <begin position="229"/>
        <end position="248"/>
    </location>
</feature>
<feature type="splice variant" id="VSP_029484" description="In isoform 8." evidence="12">
    <location>
        <begin position="249"/>
        <end position="807"/>
    </location>
</feature>
<feature type="splice variant" id="VSP_029485" description="In isoform 3, isoform 4 and isoform 5." evidence="11 12">
    <location>
        <begin position="265"/>
        <end position="297"/>
    </location>
</feature>
<feature type="splice variant" id="VSP_029486" description="In isoform 10." evidence="11">
    <location>
        <begin position="283"/>
        <end position="807"/>
    </location>
</feature>
<feature type="splice variant" id="VSP_029487" description="In isoform 7." evidence="12">
    <original>SVCSQESLFLDNSRLQEDMHICNETYKKRQLFRAHRDSSGRTSGSRQSSSETELRWPDHQRAWSSTDSDSSNRN</original>
    <variation>VSSCFNCLLSMVLPSAERPLVARTEIWQGVQRLGARNELQSRKHKCFWERTWFRDALKQSKSLCMCPPGHHLPG</variation>
    <location>
        <begin position="298"/>
        <end position="371"/>
    </location>
</feature>
<feature type="splice variant" id="VSP_029488" description="In isoform 4." evidence="12">
    <location>
        <begin position="310"/>
        <end position="329"/>
    </location>
</feature>
<feature type="splice variant" id="VSP_029489" description="In isoform 7." evidence="12">
    <location>
        <begin position="372"/>
        <end position="807"/>
    </location>
</feature>
<feature type="splice variant" id="VSP_029490" description="In isoform 3 and isoform 4." evidence="11 12">
    <original>Q</original>
    <variation>QSVQSLQPSSQSVQYPAVSFPPQHLLPMSPTQHFPL</variation>
    <location>
        <position position="543"/>
    </location>
</feature>
<feature type="splice variant" id="VSP_029491" description="In isoform 9." evidence="12">
    <original>YQPVLSGQQGFQGMMGVQQSAHSQGVMSSQ</original>
    <variation>LMIAPDTWPTVPAELALQKVTLLWISEGRW</variation>
    <location>
        <begin position="674"/>
        <end position="703"/>
    </location>
</feature>
<feature type="splice variant" id="VSP_029492" description="In isoform 9." evidence="12">
    <location>
        <begin position="704"/>
        <end position="807"/>
    </location>
</feature>
<feature type="mutagenesis site" description="Abolishes methylation, no effect on subcellular location." evidence="9">
    <original>R</original>
    <variation>A</variation>
    <location>
        <position position="650"/>
    </location>
</feature>
<feature type="sequence conflict" description="In Ref. 2; BAC26463." evidence="13" ref="2">
    <original>N</original>
    <variation>NQ</variation>
    <location>
        <position position="263"/>
    </location>
</feature>
<feature type="modified residue" description="Phosphoserine" evidence="15">
    <location sequence="Q9DCB4-4">
        <position position="265"/>
    </location>
</feature>
<name>ARP21_MOUSE</name>
<organism>
    <name type="scientific">Mus musculus</name>
    <name type="common">Mouse</name>
    <dbReference type="NCBI Taxonomy" id="10090"/>
    <lineage>
        <taxon>Eukaryota</taxon>
        <taxon>Metazoa</taxon>
        <taxon>Chordata</taxon>
        <taxon>Craniata</taxon>
        <taxon>Vertebrata</taxon>
        <taxon>Euteleostomi</taxon>
        <taxon>Mammalia</taxon>
        <taxon>Eutheria</taxon>
        <taxon>Euarchontoglires</taxon>
        <taxon>Glires</taxon>
        <taxon>Rodentia</taxon>
        <taxon>Myomorpha</taxon>
        <taxon>Muroidea</taxon>
        <taxon>Muridae</taxon>
        <taxon>Murinae</taxon>
        <taxon>Mus</taxon>
        <taxon>Mus</taxon>
    </lineage>
</organism>
<sequence>MSEQGGLTPTILEEGQTEPESAPENGILKSESLDEEEKLELQRRLAAQNQERRKSKSGAGKGKLTRSLAVCEESSARSGGESHQDQESIHLQLSSFPSLQEEDKSRKDDSEREKEKDKNREKLSERPKIRMLSKDCSQEYTDSTGIDLHGFLINTLKNNSRDRMILLKMEQEMIDFIADSNNHYKKFPQMSSYQRMLVHRVAAYFGLDHNVDQTGKSVIINKTSSTRIPEQRFCEHLKDEKSEESQKRFILKRDNSSIDKEDNQNRMHPFRDDRRSKSIEEREEEYQRVRERIFAHDSVCSQESLFLDNSRLQEDMHICNETYKKRQLFRAHRDSSGRTSGSRQSSSETELRWPDHQRAWSSTDSDSSNRNLKPTMTKTASFGGITVLTRGDSTSSTRSAGKLSKTGSESSSSAGSSGSLSRTHPQSTALTSSVAAGSPGCMAYSENGMGGQVPPSSTSYILLPLESATGIPPGSILLNPHTGQPFVNPDGTPAIYNPPGSQQTLRGTVGGQPQQPPQQQPSPQPQQQVQASQPQMAGPLVTQREELAAQFSQLSMSRQSSGDTPEPPSGTVYPASLLPQTAQPQSYVITSAGQQLSTGGFSDSGPPISQQVLQAPPSPQGFVQQPPPAQMSVYYYPSGQYPTSTSQQYRPLASVQYSAQRSQQIPQTTQQAGYQPVLSGQQGFQGMMGVQQSAHSQGVMSSQQGAPVHGVMVSYPTMSSYQVPMTQGSQAVPQQTYQPPIMLPSQAGQGSLPATGMPVYCNVTPPNPQNNLRLMGPHCPSSTVPVMSASCRTNCGNVSNAGWQVKF</sequence>
<proteinExistence type="evidence at protein level"/>
<accession>Q9DCB4</accession>
<accession>A1A561</accession>
<accession>Q3UUU8</accession>
<accession>Q7TS83</accession>
<accession>Q8BLD1</accession>
<accession>Q8BWM1</accession>
<accession>Q8C018</accession>
<accession>Q8C038</accession>
<accession>Q8C0Y6</accession>
<accession>Q91Y59</accession>
<keyword id="KW-0007">Acetylation</keyword>
<keyword id="KW-0025">Alternative splicing</keyword>
<keyword id="KW-0112">Calmodulin-binding</keyword>
<keyword id="KW-0175">Coiled coil</keyword>
<keyword id="KW-0963">Cytoplasm</keyword>
<keyword id="KW-0903">Direct protein sequencing</keyword>
<keyword id="KW-0488">Methylation</keyword>
<keyword id="KW-0597">Phosphoprotein</keyword>
<keyword id="KW-1185">Reference proteome</keyword>
<reference key="1">
    <citation type="journal article" date="2001" name="Eur. J. Immunol.">
        <title>TARPP, a novel protein that accompanies TCR gene rearrangement and thymocyte education.</title>
        <authorList>
            <person name="Kisielow J."/>
            <person name="Nairn A.C."/>
            <person name="Karjalainen K."/>
        </authorList>
    </citation>
    <scope>NUCLEOTIDE SEQUENCE [MRNA] (ISOFORM 1)</scope>
    <scope>TISSUE SPECIFICITY</scope>
    <scope>INDUCTION</scope>
    <scope>SUBCELLULAR LOCATION</scope>
    <source>
        <tissue>Thymus</tissue>
    </source>
</reference>
<reference key="2">
    <citation type="journal article" date="2005" name="Science">
        <title>The transcriptional landscape of the mammalian genome.</title>
        <authorList>
            <person name="Carninci P."/>
            <person name="Kasukawa T."/>
            <person name="Katayama S."/>
            <person name="Gough J."/>
            <person name="Frith M.C."/>
            <person name="Maeda N."/>
            <person name="Oyama R."/>
            <person name="Ravasi T."/>
            <person name="Lenhard B."/>
            <person name="Wells C."/>
            <person name="Kodzius R."/>
            <person name="Shimokawa K."/>
            <person name="Bajic V.B."/>
            <person name="Brenner S.E."/>
            <person name="Batalov S."/>
            <person name="Forrest A.R."/>
            <person name="Zavolan M."/>
            <person name="Davis M.J."/>
            <person name="Wilming L.G."/>
            <person name="Aidinis V."/>
            <person name="Allen J.E."/>
            <person name="Ambesi-Impiombato A."/>
            <person name="Apweiler R."/>
            <person name="Aturaliya R.N."/>
            <person name="Bailey T.L."/>
            <person name="Bansal M."/>
            <person name="Baxter L."/>
            <person name="Beisel K.W."/>
            <person name="Bersano T."/>
            <person name="Bono H."/>
            <person name="Chalk A.M."/>
            <person name="Chiu K.P."/>
            <person name="Choudhary V."/>
            <person name="Christoffels A."/>
            <person name="Clutterbuck D.R."/>
            <person name="Crowe M.L."/>
            <person name="Dalla E."/>
            <person name="Dalrymple B.P."/>
            <person name="de Bono B."/>
            <person name="Della Gatta G."/>
            <person name="di Bernardo D."/>
            <person name="Down T."/>
            <person name="Engstrom P."/>
            <person name="Fagiolini M."/>
            <person name="Faulkner G."/>
            <person name="Fletcher C.F."/>
            <person name="Fukushima T."/>
            <person name="Furuno M."/>
            <person name="Futaki S."/>
            <person name="Gariboldi M."/>
            <person name="Georgii-Hemming P."/>
            <person name="Gingeras T.R."/>
            <person name="Gojobori T."/>
            <person name="Green R.E."/>
            <person name="Gustincich S."/>
            <person name="Harbers M."/>
            <person name="Hayashi Y."/>
            <person name="Hensch T.K."/>
            <person name="Hirokawa N."/>
            <person name="Hill D."/>
            <person name="Huminiecki L."/>
            <person name="Iacono M."/>
            <person name="Ikeo K."/>
            <person name="Iwama A."/>
            <person name="Ishikawa T."/>
            <person name="Jakt M."/>
            <person name="Kanapin A."/>
            <person name="Katoh M."/>
            <person name="Kawasawa Y."/>
            <person name="Kelso J."/>
            <person name="Kitamura H."/>
            <person name="Kitano H."/>
            <person name="Kollias G."/>
            <person name="Krishnan S.P."/>
            <person name="Kruger A."/>
            <person name="Kummerfeld S.K."/>
            <person name="Kurochkin I.V."/>
            <person name="Lareau L.F."/>
            <person name="Lazarevic D."/>
            <person name="Lipovich L."/>
            <person name="Liu J."/>
            <person name="Liuni S."/>
            <person name="McWilliam S."/>
            <person name="Madan Babu M."/>
            <person name="Madera M."/>
            <person name="Marchionni L."/>
            <person name="Matsuda H."/>
            <person name="Matsuzawa S."/>
            <person name="Miki H."/>
            <person name="Mignone F."/>
            <person name="Miyake S."/>
            <person name="Morris K."/>
            <person name="Mottagui-Tabar S."/>
            <person name="Mulder N."/>
            <person name="Nakano N."/>
            <person name="Nakauchi H."/>
            <person name="Ng P."/>
            <person name="Nilsson R."/>
            <person name="Nishiguchi S."/>
            <person name="Nishikawa S."/>
            <person name="Nori F."/>
            <person name="Ohara O."/>
            <person name="Okazaki Y."/>
            <person name="Orlando V."/>
            <person name="Pang K.C."/>
            <person name="Pavan W.J."/>
            <person name="Pavesi G."/>
            <person name="Pesole G."/>
            <person name="Petrovsky N."/>
            <person name="Piazza S."/>
            <person name="Reed J."/>
            <person name="Reid J.F."/>
            <person name="Ring B.Z."/>
            <person name="Ringwald M."/>
            <person name="Rost B."/>
            <person name="Ruan Y."/>
            <person name="Salzberg S.L."/>
            <person name="Sandelin A."/>
            <person name="Schneider C."/>
            <person name="Schoenbach C."/>
            <person name="Sekiguchi K."/>
            <person name="Semple C.A."/>
            <person name="Seno S."/>
            <person name="Sessa L."/>
            <person name="Sheng Y."/>
            <person name="Shibata Y."/>
            <person name="Shimada H."/>
            <person name="Shimada K."/>
            <person name="Silva D."/>
            <person name="Sinclair B."/>
            <person name="Sperling S."/>
            <person name="Stupka E."/>
            <person name="Sugiura K."/>
            <person name="Sultana R."/>
            <person name="Takenaka Y."/>
            <person name="Taki K."/>
            <person name="Tammoja K."/>
            <person name="Tan S.L."/>
            <person name="Tang S."/>
            <person name="Taylor M.S."/>
            <person name="Tegner J."/>
            <person name="Teichmann S.A."/>
            <person name="Ueda H.R."/>
            <person name="van Nimwegen E."/>
            <person name="Verardo R."/>
            <person name="Wei C.L."/>
            <person name="Yagi K."/>
            <person name="Yamanishi H."/>
            <person name="Zabarovsky E."/>
            <person name="Zhu S."/>
            <person name="Zimmer A."/>
            <person name="Hide W."/>
            <person name="Bult C."/>
            <person name="Grimmond S.M."/>
            <person name="Teasdale R.D."/>
            <person name="Liu E.T."/>
            <person name="Brusic V."/>
            <person name="Quackenbush J."/>
            <person name="Wahlestedt C."/>
            <person name="Mattick J.S."/>
            <person name="Hume D.A."/>
            <person name="Kai C."/>
            <person name="Sasaki D."/>
            <person name="Tomaru Y."/>
            <person name="Fukuda S."/>
            <person name="Kanamori-Katayama M."/>
            <person name="Suzuki M."/>
            <person name="Aoki J."/>
            <person name="Arakawa T."/>
            <person name="Iida J."/>
            <person name="Imamura K."/>
            <person name="Itoh M."/>
            <person name="Kato T."/>
            <person name="Kawaji H."/>
            <person name="Kawagashira N."/>
            <person name="Kawashima T."/>
            <person name="Kojima M."/>
            <person name="Kondo S."/>
            <person name="Konno H."/>
            <person name="Nakano K."/>
            <person name="Ninomiya N."/>
            <person name="Nishio T."/>
            <person name="Okada M."/>
            <person name="Plessy C."/>
            <person name="Shibata K."/>
            <person name="Shiraki T."/>
            <person name="Suzuki S."/>
            <person name="Tagami M."/>
            <person name="Waki K."/>
            <person name="Watahiki A."/>
            <person name="Okamura-Oho Y."/>
            <person name="Suzuki H."/>
            <person name="Kawai J."/>
            <person name="Hayashizaki Y."/>
        </authorList>
    </citation>
    <scope>NUCLEOTIDE SEQUENCE [LARGE SCALE MRNA] (ISOFORMS 2; 4; 6; 7; 8 AND 9)</scope>
    <scope>NUCLEOTIDE SEQUENCE [LARGE SCALE MRNA] OF 4-807 (ISOFORM 5)</scope>
    <source>
        <strain>C57BL/6J</strain>
        <tissue>Brain</tissue>
        <tissue>Corpora quadrigemina</tissue>
        <tissue>Head</tissue>
        <tissue>Olfactory bulb</tissue>
        <tissue>Thymus</tissue>
    </source>
</reference>
<reference key="3">
    <citation type="journal article" date="2004" name="Genome Res.">
        <title>The status, quality, and expansion of the NIH full-length cDNA project: the Mammalian Gene Collection (MGC).</title>
        <authorList>
            <consortium name="The MGC Project Team"/>
        </authorList>
    </citation>
    <scope>NUCLEOTIDE SEQUENCE [LARGE SCALE MRNA] (ISOFORMS 2; 3 AND 10)</scope>
    <source>
        <strain>C57BL/6J</strain>
        <tissue>Brain</tissue>
        <tissue>Retina</tissue>
    </source>
</reference>
<reference key="4">
    <citation type="submission" date="2009-01" db="UniProtKB">
        <authorList>
            <person name="Lubec G."/>
            <person name="Sunyer B."/>
            <person name="Chen W.-Q."/>
        </authorList>
    </citation>
    <scope>PROTEIN SEQUENCE OF 55-61 AND 201-227</scope>
    <scope>IDENTIFICATION BY MASS SPECTROMETRY</scope>
    <source>
        <strain>OF1</strain>
        <tissue>Hippocampus</tissue>
    </source>
</reference>
<reference key="5">
    <citation type="journal article" date="2000" name="Neuropharmacology">
        <title>Drugs of abuse modulate the phosphorylation of ARPP-21, a cyclic AMP-regulated phosphoprotein enriched in the basal ganglia.</title>
        <authorList>
            <person name="Caporaso G.L."/>
            <person name="Bibb J.A."/>
            <person name="Snyder G.L."/>
            <person name="Valle C."/>
            <person name="Rakhilin S."/>
            <person name="Fienberg A.A."/>
            <person name="Hemmings H.C. Jr."/>
            <person name="Nairn A.C."/>
            <person name="Greengard P."/>
        </authorList>
    </citation>
    <scope>PHOSPHORYLATION AT SER-55</scope>
</reference>
<reference key="6">
    <citation type="journal article" date="2004" name="J. Biol. Chem.">
        <title>Loss of CARM1 results in hypomethylation of thymocyte cyclic AMP-regulated phosphoprotein and deregulated early T cell development.</title>
        <authorList>
            <person name="Kim J."/>
            <person name="Lee J."/>
            <person name="Yadav N."/>
            <person name="Wu Q."/>
            <person name="Carter C."/>
            <person name="Richard S."/>
            <person name="Richie E."/>
            <person name="Bedford M.T."/>
        </authorList>
    </citation>
    <scope>METHYLATION AT ARG-650</scope>
    <scope>MUTAGENESIS OF ARG-650</scope>
    <scope>SUBCELLULAR LOCATION</scope>
</reference>
<reference key="7">
    <citation type="journal article" date="2004" name="Science">
        <title>A network of control mediated by regulator of calcium/calmodulin-dependent signaling.</title>
        <authorList>
            <person name="Rakhilin S.V."/>
            <person name="Olson P.A."/>
            <person name="Nishi A."/>
            <person name="Starkova N.N."/>
            <person name="Fienberg A.A."/>
            <person name="Nairn A.C."/>
            <person name="Surmeier D.J."/>
            <person name="Greengard P."/>
        </authorList>
    </citation>
    <scope>INTERACTION WITH CALM1</scope>
    <scope>FUNCTION</scope>
    <scope>PHOSPHORYLATION AT SER-55</scope>
</reference>
<reference key="8">
    <citation type="journal article" date="2010" name="Cell">
        <title>A tissue-specific atlas of mouse protein phosphorylation and expression.</title>
        <authorList>
            <person name="Huttlin E.L."/>
            <person name="Jedrychowski M.P."/>
            <person name="Elias J.E."/>
            <person name="Goswami T."/>
            <person name="Rad R."/>
            <person name="Beausoleil S.A."/>
            <person name="Villen J."/>
            <person name="Haas W."/>
            <person name="Sowa M.E."/>
            <person name="Gygi S.P."/>
        </authorList>
    </citation>
    <scope>PHOSPHORYLATION [LARGE SCALE ANALYSIS] AT SER-32; SER-133; SER-298; SER-361 AND SER-557</scope>
    <scope>PHOSPHORYLATION [LARGE SCALE ANALYSIS] AT SER-265 (ISOFORM 4)</scope>
    <scope>IDENTIFICATION BY MASS SPECTROMETRY [LARGE SCALE ANALYSIS]</scope>
    <source>
        <tissue>Brain</tissue>
        <tissue>Lung</tissue>
    </source>
</reference>
<protein>
    <recommendedName>
        <fullName>cAMP-regulated phosphoprotein 21</fullName>
        <shortName>ARPP-21</shortName>
    </recommendedName>
    <alternativeName>
        <fullName>Regulator of calmodulin signaling</fullName>
    </alternativeName>
    <alternativeName>
        <fullName>Thymocyte cAMP-regulated phosphoprotein</fullName>
    </alternativeName>
</protein>
<dbReference type="EMBL" id="AF324451">
    <property type="protein sequence ID" value="AAK48713.1"/>
    <property type="molecule type" value="mRNA"/>
</dbReference>
<dbReference type="EMBL" id="AK002950">
    <property type="status" value="NOT_ANNOTATED_CDS"/>
    <property type="molecule type" value="mRNA"/>
</dbReference>
<dbReference type="EMBL" id="AK029467">
    <property type="protein sequence ID" value="BAC26463.1"/>
    <property type="molecule type" value="mRNA"/>
</dbReference>
<dbReference type="EMBL" id="AK032417">
    <property type="protein sequence ID" value="BAC27859.1"/>
    <property type="molecule type" value="mRNA"/>
</dbReference>
<dbReference type="EMBL" id="AK032543">
    <property type="protein sequence ID" value="BAC27918.1"/>
    <property type="molecule type" value="mRNA"/>
</dbReference>
<dbReference type="EMBL" id="AK045507">
    <property type="protein sequence ID" value="BAC32399.1"/>
    <property type="molecule type" value="mRNA"/>
</dbReference>
<dbReference type="EMBL" id="AK050613">
    <property type="protein sequence ID" value="BAC34343.1"/>
    <property type="molecule type" value="mRNA"/>
</dbReference>
<dbReference type="EMBL" id="AK137974">
    <property type="protein sequence ID" value="BAE23526.1"/>
    <property type="molecule type" value="mRNA"/>
</dbReference>
<dbReference type="EMBL" id="BC027107">
    <property type="protein sequence ID" value="AAH27107.1"/>
    <property type="molecule type" value="mRNA"/>
</dbReference>
<dbReference type="EMBL" id="BC053001">
    <property type="protein sequence ID" value="AAH53001.1"/>
    <property type="molecule type" value="mRNA"/>
</dbReference>
<dbReference type="EMBL" id="BC128376">
    <property type="status" value="NOT_ANNOTATED_CDS"/>
    <property type="molecule type" value="mRNA"/>
</dbReference>
<dbReference type="CCDS" id="CCDS23587.1">
    <molecule id="Q9DCB4-1"/>
</dbReference>
<dbReference type="CCDS" id="CCDS40786.1">
    <molecule id="Q9DCB4-2"/>
</dbReference>
<dbReference type="CCDS" id="CCDS52943.1">
    <molecule id="Q9DCB4-9"/>
</dbReference>
<dbReference type="CCDS" id="CCDS52944.1">
    <molecule id="Q9DCB4-4"/>
</dbReference>
<dbReference type="CCDS" id="CCDS52945.1">
    <molecule id="Q9DCB4-3"/>
</dbReference>
<dbReference type="CCDS" id="CCDS52946.1">
    <molecule id="Q9DCB4-8"/>
</dbReference>
<dbReference type="RefSeq" id="NP_001171086.1">
    <molecule id="Q9DCB4-2"/>
    <property type="nucleotide sequence ID" value="NM_001177615.1"/>
</dbReference>
<dbReference type="RefSeq" id="NP_001171087.1">
    <molecule id="Q9DCB4-4"/>
    <property type="nucleotide sequence ID" value="NM_001177616.1"/>
</dbReference>
<dbReference type="RefSeq" id="NP_001171088.1">
    <property type="nucleotide sequence ID" value="NM_001177617.1"/>
</dbReference>
<dbReference type="RefSeq" id="NP_001171089.1">
    <molecule id="Q9DCB4-3"/>
    <property type="nucleotide sequence ID" value="NM_001177618.1"/>
</dbReference>
<dbReference type="RefSeq" id="NP_001171090.1">
    <property type="nucleotide sequence ID" value="NM_001177619.1"/>
</dbReference>
<dbReference type="RefSeq" id="NP_001171091.1">
    <molecule id="Q9DCB4-2"/>
    <property type="nucleotide sequence ID" value="NM_001177620.1"/>
</dbReference>
<dbReference type="RefSeq" id="NP_001171094.1">
    <molecule id="Q9DCB4-8"/>
    <property type="nucleotide sequence ID" value="NM_001177623.1"/>
</dbReference>
<dbReference type="RefSeq" id="NP_001348929.1">
    <molecule id="Q9DCB4-2"/>
    <property type="nucleotide sequence ID" value="NM_001362000.1"/>
</dbReference>
<dbReference type="RefSeq" id="NP_001348930.1">
    <molecule id="Q9DCB4-2"/>
    <property type="nucleotide sequence ID" value="NM_001362001.1"/>
</dbReference>
<dbReference type="RefSeq" id="NP_001348931.1">
    <molecule id="Q9DCB4-2"/>
    <property type="nucleotide sequence ID" value="NM_001362002.1"/>
</dbReference>
<dbReference type="RefSeq" id="NP_001348932.1">
    <molecule id="Q9DCB4-2"/>
    <property type="nucleotide sequence ID" value="NM_001362003.1"/>
</dbReference>
<dbReference type="RefSeq" id="NP_001348933.1">
    <molecule id="Q9DCB4-2"/>
    <property type="nucleotide sequence ID" value="NM_001362004.1"/>
</dbReference>
<dbReference type="RefSeq" id="NP_001348934.1">
    <molecule id="Q9DCB4-2"/>
    <property type="nucleotide sequence ID" value="NM_001362005.1"/>
</dbReference>
<dbReference type="RefSeq" id="NP_001348935.1">
    <molecule id="Q9DCB4-2"/>
    <property type="nucleotide sequence ID" value="NM_001362006.1"/>
</dbReference>
<dbReference type="RefSeq" id="NP_001348936.1">
    <molecule id="Q9DCB4-2"/>
    <property type="nucleotide sequence ID" value="NM_001362007.1"/>
</dbReference>
<dbReference type="RefSeq" id="NP_001348937.1">
    <molecule id="Q9DCB4-2"/>
    <property type="nucleotide sequence ID" value="NM_001362008.1"/>
</dbReference>
<dbReference type="RefSeq" id="NP_001348938.1">
    <molecule id="Q9DCB4-2"/>
    <property type="nucleotide sequence ID" value="NM_001362009.1"/>
</dbReference>
<dbReference type="RefSeq" id="NP_001348939.1">
    <molecule id="Q9DCB4-3"/>
    <property type="nucleotide sequence ID" value="NM_001362010.1"/>
</dbReference>
<dbReference type="RefSeq" id="NP_001348940.1">
    <molecule id="Q9DCB4-3"/>
    <property type="nucleotide sequence ID" value="NM_001362011.1"/>
</dbReference>
<dbReference type="RefSeq" id="NP_001348941.1">
    <molecule id="Q9DCB4-3"/>
    <property type="nucleotide sequence ID" value="NM_001362012.1"/>
</dbReference>
<dbReference type="RefSeq" id="NP_001348942.1">
    <molecule id="Q9DCB4-3"/>
    <property type="nucleotide sequence ID" value="NM_001362013.1"/>
</dbReference>
<dbReference type="RefSeq" id="NP_001348943.1">
    <molecule id="Q9DCB4-3"/>
    <property type="nucleotide sequence ID" value="NM_001362014.1"/>
</dbReference>
<dbReference type="RefSeq" id="NP_001348944.1">
    <molecule id="Q9DCB4-3"/>
    <property type="nucleotide sequence ID" value="NM_001362015.1"/>
</dbReference>
<dbReference type="RefSeq" id="NP_001348945.1">
    <molecule id="Q9DCB4-4"/>
    <property type="nucleotide sequence ID" value="NM_001362016.1"/>
</dbReference>
<dbReference type="RefSeq" id="NP_001348946.1">
    <molecule id="Q9DCB4-4"/>
    <property type="nucleotide sequence ID" value="NM_001362017.1"/>
</dbReference>
<dbReference type="RefSeq" id="NP_001348947.1">
    <molecule id="Q9DCB4-4"/>
    <property type="nucleotide sequence ID" value="NM_001362018.1"/>
</dbReference>
<dbReference type="RefSeq" id="NP_001348965.1">
    <molecule id="Q9DCB4-5"/>
    <property type="nucleotide sequence ID" value="NM_001362036.1"/>
</dbReference>
<dbReference type="RefSeq" id="NP_001348966.1">
    <molecule id="Q9DCB4-5"/>
    <property type="nucleotide sequence ID" value="NM_001362037.1"/>
</dbReference>
<dbReference type="RefSeq" id="NP_083031.1">
    <molecule id="Q9DCB4-2"/>
    <property type="nucleotide sequence ID" value="NM_028755.3"/>
</dbReference>
<dbReference type="RefSeq" id="NP_150289.1">
    <molecule id="Q9DCB4-1"/>
    <property type="nucleotide sequence ID" value="NM_033264.2"/>
</dbReference>
<dbReference type="RefSeq" id="XP_006512407.1">
    <molecule id="Q9DCB4-3"/>
    <property type="nucleotide sequence ID" value="XM_006512344.5"/>
</dbReference>
<dbReference type="RefSeq" id="XP_006512411.1">
    <molecule id="Q9DCB4-1"/>
    <property type="nucleotide sequence ID" value="XM_006512348.5"/>
</dbReference>
<dbReference type="RefSeq" id="XP_006512413.1">
    <molecule id="Q9DCB4-4"/>
    <property type="nucleotide sequence ID" value="XM_006512350.5"/>
</dbReference>
<dbReference type="RefSeq" id="XP_006512414.1">
    <molecule id="Q9DCB4-5"/>
    <property type="nucleotide sequence ID" value="XM_006512351.5"/>
</dbReference>
<dbReference type="RefSeq" id="XP_006512424.1">
    <property type="nucleotide sequence ID" value="XM_006512361.3"/>
</dbReference>
<dbReference type="RefSeq" id="XP_006512425.1">
    <property type="nucleotide sequence ID" value="XM_006512362.3"/>
</dbReference>
<dbReference type="RefSeq" id="XP_017169139.1">
    <molecule id="Q9DCB4-3"/>
    <property type="nucleotide sequence ID" value="XM_017313650.3"/>
</dbReference>
<dbReference type="RefSeq" id="XP_017169140.1">
    <property type="nucleotide sequence ID" value="XM_017313651.1"/>
</dbReference>
<dbReference type="RefSeq" id="XP_017169141.1">
    <property type="nucleotide sequence ID" value="XM_017313652.1"/>
</dbReference>
<dbReference type="RefSeq" id="XP_017169142.1">
    <property type="nucleotide sequence ID" value="XM_017313653.1"/>
</dbReference>
<dbReference type="RefSeq" id="XP_017169146.1">
    <property type="nucleotide sequence ID" value="XM_017313657.1"/>
</dbReference>
<dbReference type="RefSeq" id="XP_017169148.1">
    <property type="nucleotide sequence ID" value="XM_017313659.1"/>
</dbReference>
<dbReference type="RefSeq" id="XP_017169149.1">
    <property type="nucleotide sequence ID" value="XM_017313660.1"/>
</dbReference>
<dbReference type="RefSeq" id="XP_017169152.1">
    <property type="nucleotide sequence ID" value="XM_017313663.1"/>
</dbReference>
<dbReference type="RefSeq" id="XP_030100530.1">
    <molecule id="Q9DCB4-4"/>
    <property type="nucleotide sequence ID" value="XM_030244670.1"/>
</dbReference>
<dbReference type="SMR" id="Q9DCB4"/>
<dbReference type="BioGRID" id="216492">
    <property type="interactions" value="1"/>
</dbReference>
<dbReference type="FunCoup" id="Q9DCB4">
    <property type="interactions" value="511"/>
</dbReference>
<dbReference type="STRING" id="10090.ENSMUSP00000107503"/>
<dbReference type="GlyGen" id="Q9DCB4">
    <property type="glycosylation" value="4 sites, 2 N-linked glycans (2 sites)"/>
</dbReference>
<dbReference type="iPTMnet" id="Q9DCB4"/>
<dbReference type="PhosphoSitePlus" id="Q9DCB4"/>
<dbReference type="SwissPalm" id="Q9DCB4"/>
<dbReference type="jPOST" id="Q9DCB4"/>
<dbReference type="PeptideAtlas" id="Q9DCB4"/>
<dbReference type="ProteomicsDB" id="283233">
    <molecule id="Q9DCB4-1"/>
</dbReference>
<dbReference type="ProteomicsDB" id="283234">
    <molecule id="Q9DCB4-2"/>
</dbReference>
<dbReference type="ProteomicsDB" id="283235">
    <molecule id="Q9DCB4-3"/>
</dbReference>
<dbReference type="ProteomicsDB" id="283236">
    <molecule id="Q9DCB4-4"/>
</dbReference>
<dbReference type="ProteomicsDB" id="283237">
    <molecule id="Q9DCB4-5"/>
</dbReference>
<dbReference type="ProteomicsDB" id="283238">
    <molecule id="Q9DCB4-6"/>
</dbReference>
<dbReference type="ProteomicsDB" id="283239">
    <molecule id="Q9DCB4-7"/>
</dbReference>
<dbReference type="ProteomicsDB" id="283240">
    <molecule id="Q9DCB4-8"/>
</dbReference>
<dbReference type="ProteomicsDB" id="283241">
    <molecule id="Q9DCB4-9"/>
</dbReference>
<dbReference type="ProteomicsDB" id="283242">
    <molecule id="Q9DCB4-10"/>
</dbReference>
<dbReference type="Antibodypedia" id="2806">
    <property type="antibodies" value="154 antibodies from 27 providers"/>
</dbReference>
<dbReference type="DNASU" id="74100"/>
<dbReference type="Ensembl" id="ENSMUST00000035085.12">
    <molecule id="Q9DCB4-4"/>
    <property type="protein sequence ID" value="ENSMUSP00000035085.6"/>
    <property type="gene ID" value="ENSMUSG00000032503.19"/>
</dbReference>
<dbReference type="Ensembl" id="ENSMUST00000070218.12">
    <molecule id="Q9DCB4-3"/>
    <property type="protein sequence ID" value="ENSMUSP00000069264.6"/>
    <property type="gene ID" value="ENSMUSG00000032503.19"/>
</dbReference>
<dbReference type="Ensembl" id="ENSMUST00000111872.9">
    <molecule id="Q9DCB4-3"/>
    <property type="protein sequence ID" value="ENSMUSP00000107503.3"/>
    <property type="gene ID" value="ENSMUSG00000032503.19"/>
</dbReference>
<dbReference type="Ensembl" id="ENSMUST00000161412.8">
    <molecule id="Q9DCB4-8"/>
    <property type="protein sequence ID" value="ENSMUSP00000125282.2"/>
    <property type="gene ID" value="ENSMUSG00000032503.19"/>
</dbReference>
<dbReference type="Ensembl" id="ENSMUST00000162065.8">
    <molecule id="Q9DCB4-3"/>
    <property type="protein sequence ID" value="ENSMUSP00000125684.2"/>
    <property type="gene ID" value="ENSMUSG00000032503.19"/>
</dbReference>
<dbReference type="Ensembl" id="ENSMUST00000162097.8">
    <molecule id="Q9DCB4-1"/>
    <property type="protein sequence ID" value="ENSMUSP00000124502.2"/>
    <property type="gene ID" value="ENSMUSG00000032503.19"/>
</dbReference>
<dbReference type="Ensembl" id="ENSMUST00000164754.9">
    <molecule id="Q9DCB4-1"/>
    <property type="protein sequence ID" value="ENSMUSP00000125862.3"/>
    <property type="gene ID" value="ENSMUSG00000032503.19"/>
</dbReference>
<dbReference type="Ensembl" id="ENSMUST00000172380.10">
    <molecule id="Q9DCB4-2"/>
    <property type="protein sequence ID" value="ENSMUSP00000130558.4"/>
    <property type="gene ID" value="ENSMUSG00000032503.19"/>
</dbReference>
<dbReference type="Ensembl" id="ENSMUST00000178410.2">
    <molecule id="Q9DCB4-2"/>
    <property type="protein sequence ID" value="ENSMUSP00000136769.2"/>
    <property type="gene ID" value="ENSMUSG00000032503.19"/>
</dbReference>
<dbReference type="GeneID" id="74100"/>
<dbReference type="KEGG" id="mmu:74100"/>
<dbReference type="UCSC" id="uc009rvx.2">
    <molecule id="Q9DCB4-3"/>
    <property type="organism name" value="mouse"/>
</dbReference>
<dbReference type="UCSC" id="uc009rvy.2">
    <molecule id="Q9DCB4-5"/>
    <property type="organism name" value="mouse"/>
</dbReference>
<dbReference type="UCSC" id="uc009rvz.2">
    <molecule id="Q9DCB4-1"/>
    <property type="organism name" value="mouse"/>
</dbReference>
<dbReference type="UCSC" id="uc009rwa.2">
    <molecule id="Q9DCB4-4"/>
    <property type="organism name" value="mouse"/>
</dbReference>
<dbReference type="UCSC" id="uc009rwc.2">
    <molecule id="Q9DCB4-7"/>
    <property type="organism name" value="mouse"/>
</dbReference>
<dbReference type="UCSC" id="uc009rwe.2">
    <molecule id="Q9DCB4-8"/>
    <property type="organism name" value="mouse"/>
</dbReference>
<dbReference type="UCSC" id="uc009rwf.1">
    <molecule id="Q9DCB4-6"/>
    <property type="organism name" value="mouse"/>
</dbReference>
<dbReference type="UCSC" id="uc009rwg.2">
    <molecule id="Q9DCB4-2"/>
    <property type="organism name" value="mouse"/>
</dbReference>
<dbReference type="AGR" id="MGI:107562"/>
<dbReference type="CTD" id="10777"/>
<dbReference type="MGI" id="MGI:107562">
    <property type="gene designation" value="Arpp21"/>
</dbReference>
<dbReference type="VEuPathDB" id="HostDB:ENSMUSG00000032503"/>
<dbReference type="GeneTree" id="ENSGT00940000160796"/>
<dbReference type="HOGENOM" id="CLU_007817_1_0_1"/>
<dbReference type="InParanoid" id="Q9DCB4"/>
<dbReference type="OMA" id="SSGCVPY"/>
<dbReference type="PhylomeDB" id="Q9DCB4"/>
<dbReference type="TreeFam" id="TF315915"/>
<dbReference type="BioGRID-ORCS" id="74100">
    <property type="hits" value="0 hits in 73 CRISPR screens"/>
</dbReference>
<dbReference type="ChiTaRS" id="Arpp21">
    <property type="organism name" value="mouse"/>
</dbReference>
<dbReference type="PRO" id="PR:Q9DCB4"/>
<dbReference type="Proteomes" id="UP000000589">
    <property type="component" value="Chromosome 9"/>
</dbReference>
<dbReference type="RNAct" id="Q9DCB4">
    <property type="molecule type" value="protein"/>
</dbReference>
<dbReference type="Bgee" id="ENSMUSG00000032503">
    <property type="expression patterns" value="Expressed in caudate-putamen and 170 other cell types or tissues"/>
</dbReference>
<dbReference type="ExpressionAtlas" id="Q9DCB4">
    <property type="expression patterns" value="baseline and differential"/>
</dbReference>
<dbReference type="GO" id="GO:0005737">
    <property type="term" value="C:cytoplasm"/>
    <property type="evidence" value="ECO:0000314"/>
    <property type="project" value="CACAO"/>
</dbReference>
<dbReference type="GO" id="GO:0005516">
    <property type="term" value="F:calmodulin binding"/>
    <property type="evidence" value="ECO:0007669"/>
    <property type="project" value="UniProtKB-KW"/>
</dbReference>
<dbReference type="GO" id="GO:0003676">
    <property type="term" value="F:nucleic acid binding"/>
    <property type="evidence" value="ECO:0007669"/>
    <property type="project" value="InterPro"/>
</dbReference>
<dbReference type="GO" id="GO:0034605">
    <property type="term" value="P:cellular response to heat"/>
    <property type="evidence" value="ECO:0000314"/>
    <property type="project" value="MGI"/>
</dbReference>
<dbReference type="CDD" id="cd02642">
    <property type="entry name" value="R3H_encore_like"/>
    <property type="match status" value="1"/>
</dbReference>
<dbReference type="FunFam" id="3.30.1370.50:FF:000001">
    <property type="entry name" value="R3H domain-containing protein 2 isoform 1"/>
    <property type="match status" value="1"/>
</dbReference>
<dbReference type="Gene3D" id="3.30.1370.50">
    <property type="entry name" value="R3H-like domain"/>
    <property type="match status" value="1"/>
</dbReference>
<dbReference type="InterPro" id="IPR001374">
    <property type="entry name" value="R3H_dom"/>
</dbReference>
<dbReference type="InterPro" id="IPR036867">
    <property type="entry name" value="R3H_dom_sf"/>
</dbReference>
<dbReference type="InterPro" id="IPR051937">
    <property type="entry name" value="R3H_domain_containing"/>
</dbReference>
<dbReference type="InterPro" id="IPR024771">
    <property type="entry name" value="SUZ"/>
</dbReference>
<dbReference type="PANTHER" id="PTHR15672:SF14">
    <property type="entry name" value="CAMP-REGULATED PHOSPHOPROTEIN 21"/>
    <property type="match status" value="1"/>
</dbReference>
<dbReference type="PANTHER" id="PTHR15672">
    <property type="entry name" value="CAMP-REGULATED PHOSPHOPROTEIN 21 RELATED R3H DOMAIN CONTAINING PROTEIN"/>
    <property type="match status" value="1"/>
</dbReference>
<dbReference type="Pfam" id="PF01424">
    <property type="entry name" value="R3H"/>
    <property type="match status" value="1"/>
</dbReference>
<dbReference type="Pfam" id="PF12752">
    <property type="entry name" value="SUZ"/>
    <property type="match status" value="1"/>
</dbReference>
<dbReference type="SMART" id="SM00393">
    <property type="entry name" value="R3H"/>
    <property type="match status" value="1"/>
</dbReference>
<dbReference type="SUPFAM" id="SSF82708">
    <property type="entry name" value="R3H domain"/>
    <property type="match status" value="1"/>
</dbReference>
<dbReference type="PROSITE" id="PS51061">
    <property type="entry name" value="R3H"/>
    <property type="match status" value="1"/>
</dbReference>
<dbReference type="PROSITE" id="PS51673">
    <property type="entry name" value="SUZ"/>
    <property type="match status" value="1"/>
</dbReference>
<evidence type="ECO:0000250" key="1">
    <source>
        <dbReference type="UniProtKB" id="Q7M2N1"/>
    </source>
</evidence>
<evidence type="ECO:0000250" key="2">
    <source>
        <dbReference type="UniProtKB" id="Q9UBL0"/>
    </source>
</evidence>
<evidence type="ECO:0000255" key="3"/>
<evidence type="ECO:0000255" key="4">
    <source>
        <dbReference type="PROSITE-ProRule" id="PRU00382"/>
    </source>
</evidence>
<evidence type="ECO:0000255" key="5">
    <source>
        <dbReference type="PROSITE-ProRule" id="PRU01009"/>
    </source>
</evidence>
<evidence type="ECO:0000256" key="6">
    <source>
        <dbReference type="SAM" id="MobiDB-lite"/>
    </source>
</evidence>
<evidence type="ECO:0000269" key="7">
    <source>
    </source>
</evidence>
<evidence type="ECO:0000269" key="8">
    <source>
    </source>
</evidence>
<evidence type="ECO:0000269" key="9">
    <source>
    </source>
</evidence>
<evidence type="ECO:0000269" key="10">
    <source>
    </source>
</evidence>
<evidence type="ECO:0000303" key="11">
    <source>
    </source>
</evidence>
<evidence type="ECO:0000303" key="12">
    <source>
    </source>
</evidence>
<evidence type="ECO:0000305" key="13"/>
<evidence type="ECO:0000305" key="14">
    <source>
    </source>
</evidence>
<evidence type="ECO:0007744" key="15">
    <source>
    </source>
</evidence>